<evidence type="ECO:0000255" key="1">
    <source>
        <dbReference type="HAMAP-Rule" id="MF_00480"/>
    </source>
</evidence>
<evidence type="ECO:0000305" key="2"/>
<comment type="function">
    <text evidence="1">One of the primary rRNA binding proteins, it binds directly to 16S rRNA where it nucleates assembly of the head domain of the 30S subunit. Is located at the subunit interface close to the decoding center, probably blocks exit of the E-site tRNA.</text>
</comment>
<comment type="subunit">
    <text evidence="1">Part of the 30S ribosomal subunit. Contacts proteins S9 and S11.</text>
</comment>
<comment type="similarity">
    <text evidence="1">Belongs to the universal ribosomal protein uS7 family.</text>
</comment>
<reference key="1">
    <citation type="submission" date="2006-12" db="EMBL/GenBank/DDBJ databases">
        <title>Complete sequence of chromosome of Mycobacterium sp. KMS.</title>
        <authorList>
            <consortium name="US DOE Joint Genome Institute"/>
            <person name="Copeland A."/>
            <person name="Lucas S."/>
            <person name="Lapidus A."/>
            <person name="Barry K."/>
            <person name="Detter J.C."/>
            <person name="Glavina del Rio T."/>
            <person name="Hammon N."/>
            <person name="Israni S."/>
            <person name="Dalin E."/>
            <person name="Tice H."/>
            <person name="Pitluck S."/>
            <person name="Kiss H."/>
            <person name="Brettin T."/>
            <person name="Bruce D."/>
            <person name="Han C."/>
            <person name="Tapia R."/>
            <person name="Gilna P."/>
            <person name="Schmutz J."/>
            <person name="Larimer F."/>
            <person name="Land M."/>
            <person name="Hauser L."/>
            <person name="Kyrpides N."/>
            <person name="Mikhailova N."/>
            <person name="Miller C.D."/>
            <person name="Richardson P."/>
        </authorList>
    </citation>
    <scope>NUCLEOTIDE SEQUENCE [LARGE SCALE GENOMIC DNA]</scope>
    <source>
        <strain>KMS</strain>
    </source>
</reference>
<accession>A1UBK9</accession>
<protein>
    <recommendedName>
        <fullName evidence="1">Small ribosomal subunit protein uS7</fullName>
    </recommendedName>
    <alternativeName>
        <fullName evidence="2">30S ribosomal protein S7</fullName>
    </alternativeName>
</protein>
<gene>
    <name evidence="1" type="primary">rpsG</name>
    <name type="ordered locus">Mkms_1003</name>
</gene>
<organism>
    <name type="scientific">Mycobacterium sp. (strain KMS)</name>
    <dbReference type="NCBI Taxonomy" id="189918"/>
    <lineage>
        <taxon>Bacteria</taxon>
        <taxon>Bacillati</taxon>
        <taxon>Actinomycetota</taxon>
        <taxon>Actinomycetes</taxon>
        <taxon>Mycobacteriales</taxon>
        <taxon>Mycobacteriaceae</taxon>
        <taxon>Mycobacterium</taxon>
    </lineage>
</organism>
<dbReference type="EMBL" id="CP000518">
    <property type="protein sequence ID" value="ABL90217.1"/>
    <property type="molecule type" value="Genomic_DNA"/>
</dbReference>
<dbReference type="SMR" id="A1UBK9"/>
<dbReference type="STRING" id="189918.Mkms_1003"/>
<dbReference type="KEGG" id="mkm:Mkms_1003"/>
<dbReference type="HOGENOM" id="CLU_072226_1_1_11"/>
<dbReference type="OrthoDB" id="9807653at2"/>
<dbReference type="GO" id="GO:0015935">
    <property type="term" value="C:small ribosomal subunit"/>
    <property type="evidence" value="ECO:0007669"/>
    <property type="project" value="InterPro"/>
</dbReference>
<dbReference type="GO" id="GO:0019843">
    <property type="term" value="F:rRNA binding"/>
    <property type="evidence" value="ECO:0007669"/>
    <property type="project" value="UniProtKB-UniRule"/>
</dbReference>
<dbReference type="GO" id="GO:0003735">
    <property type="term" value="F:structural constituent of ribosome"/>
    <property type="evidence" value="ECO:0007669"/>
    <property type="project" value="InterPro"/>
</dbReference>
<dbReference type="GO" id="GO:0000049">
    <property type="term" value="F:tRNA binding"/>
    <property type="evidence" value="ECO:0007669"/>
    <property type="project" value="UniProtKB-UniRule"/>
</dbReference>
<dbReference type="GO" id="GO:0006412">
    <property type="term" value="P:translation"/>
    <property type="evidence" value="ECO:0007669"/>
    <property type="project" value="UniProtKB-UniRule"/>
</dbReference>
<dbReference type="CDD" id="cd14869">
    <property type="entry name" value="uS7_Bacteria"/>
    <property type="match status" value="1"/>
</dbReference>
<dbReference type="FunFam" id="1.10.455.10:FF:000001">
    <property type="entry name" value="30S ribosomal protein S7"/>
    <property type="match status" value="1"/>
</dbReference>
<dbReference type="Gene3D" id="1.10.455.10">
    <property type="entry name" value="Ribosomal protein S7 domain"/>
    <property type="match status" value="1"/>
</dbReference>
<dbReference type="HAMAP" id="MF_00480_B">
    <property type="entry name" value="Ribosomal_uS7_B"/>
    <property type="match status" value="1"/>
</dbReference>
<dbReference type="InterPro" id="IPR000235">
    <property type="entry name" value="Ribosomal_uS7"/>
</dbReference>
<dbReference type="InterPro" id="IPR005717">
    <property type="entry name" value="Ribosomal_uS7_bac/org-type"/>
</dbReference>
<dbReference type="InterPro" id="IPR020606">
    <property type="entry name" value="Ribosomal_uS7_CS"/>
</dbReference>
<dbReference type="InterPro" id="IPR023798">
    <property type="entry name" value="Ribosomal_uS7_dom"/>
</dbReference>
<dbReference type="InterPro" id="IPR036823">
    <property type="entry name" value="Ribosomal_uS7_dom_sf"/>
</dbReference>
<dbReference type="NCBIfam" id="TIGR01029">
    <property type="entry name" value="rpsG_bact"/>
    <property type="match status" value="1"/>
</dbReference>
<dbReference type="PANTHER" id="PTHR11205">
    <property type="entry name" value="RIBOSOMAL PROTEIN S7"/>
    <property type="match status" value="1"/>
</dbReference>
<dbReference type="Pfam" id="PF00177">
    <property type="entry name" value="Ribosomal_S7"/>
    <property type="match status" value="1"/>
</dbReference>
<dbReference type="PIRSF" id="PIRSF002122">
    <property type="entry name" value="RPS7p_RPS7a_RPS5e_RPS7o"/>
    <property type="match status" value="1"/>
</dbReference>
<dbReference type="SUPFAM" id="SSF47973">
    <property type="entry name" value="Ribosomal protein S7"/>
    <property type="match status" value="1"/>
</dbReference>
<dbReference type="PROSITE" id="PS00052">
    <property type="entry name" value="RIBOSOMAL_S7"/>
    <property type="match status" value="1"/>
</dbReference>
<keyword id="KW-0687">Ribonucleoprotein</keyword>
<keyword id="KW-0689">Ribosomal protein</keyword>
<keyword id="KW-0694">RNA-binding</keyword>
<keyword id="KW-0699">rRNA-binding</keyword>
<keyword id="KW-0820">tRNA-binding</keyword>
<name>RS7_MYCSK</name>
<proteinExistence type="inferred from homology"/>
<feature type="chain" id="PRO_1000014236" description="Small ribosomal subunit protein uS7">
    <location>
        <begin position="1"/>
        <end position="156"/>
    </location>
</feature>
<sequence>MPRKGPAPKRPLVNDPVYGSQLVTQLVNKVLLDGKKSLAERIVYGALEQARDKTGTDPVVTLKRALDNVKPALEVRSRRVGGATYQVPVEVRPDRSVTLALRWLVSFSKARREKTMVERLANEILDASNGLGAAVKRREDTHKMAEANRAFAHYRW</sequence>